<proteinExistence type="inferred from homology"/>
<name>NUBP2_DROWI</name>
<accession>B4N4D9</accession>
<dbReference type="EMBL" id="CH964095">
    <property type="protein sequence ID" value="EDW79013.1"/>
    <property type="molecule type" value="Genomic_DNA"/>
</dbReference>
<dbReference type="SMR" id="B4N4D9"/>
<dbReference type="STRING" id="7260.B4N4D9"/>
<dbReference type="EnsemblMetazoa" id="FBtr0242706">
    <property type="protein sequence ID" value="FBpp0241198"/>
    <property type="gene ID" value="FBgn0214066"/>
</dbReference>
<dbReference type="EnsemblMetazoa" id="XM_002067991.4">
    <property type="protein sequence ID" value="XP_002068027.1"/>
    <property type="gene ID" value="LOC6645503"/>
</dbReference>
<dbReference type="GeneID" id="6645503"/>
<dbReference type="KEGG" id="dwi:6645503"/>
<dbReference type="CTD" id="10101"/>
<dbReference type="eggNOG" id="KOG3022">
    <property type="taxonomic scope" value="Eukaryota"/>
</dbReference>
<dbReference type="HOGENOM" id="CLU_024839_0_1_1"/>
<dbReference type="OMA" id="WIPVFAD"/>
<dbReference type="OrthoDB" id="1741334at2759"/>
<dbReference type="PhylomeDB" id="B4N4D9"/>
<dbReference type="Proteomes" id="UP000007798">
    <property type="component" value="Unassembled WGS sequence"/>
</dbReference>
<dbReference type="GO" id="GO:0005829">
    <property type="term" value="C:cytosol"/>
    <property type="evidence" value="ECO:0007669"/>
    <property type="project" value="TreeGrafter"/>
</dbReference>
<dbReference type="GO" id="GO:0051539">
    <property type="term" value="F:4 iron, 4 sulfur cluster binding"/>
    <property type="evidence" value="ECO:0007669"/>
    <property type="project" value="UniProtKB-UniRule"/>
</dbReference>
<dbReference type="GO" id="GO:0005524">
    <property type="term" value="F:ATP binding"/>
    <property type="evidence" value="ECO:0007669"/>
    <property type="project" value="UniProtKB-KW"/>
</dbReference>
<dbReference type="GO" id="GO:0140663">
    <property type="term" value="F:ATP-dependent FeS chaperone activity"/>
    <property type="evidence" value="ECO:0007669"/>
    <property type="project" value="InterPro"/>
</dbReference>
<dbReference type="GO" id="GO:0046872">
    <property type="term" value="F:metal ion binding"/>
    <property type="evidence" value="ECO:0007669"/>
    <property type="project" value="UniProtKB-KW"/>
</dbReference>
<dbReference type="GO" id="GO:0016226">
    <property type="term" value="P:iron-sulfur cluster assembly"/>
    <property type="evidence" value="ECO:0007669"/>
    <property type="project" value="UniProtKB-UniRule"/>
</dbReference>
<dbReference type="CDD" id="cd02037">
    <property type="entry name" value="Mrp_NBP35"/>
    <property type="match status" value="1"/>
</dbReference>
<dbReference type="FunFam" id="3.40.50.300:FF:000796">
    <property type="entry name" value="Cytosolic Fe-S cluster assembly factor NUBP2"/>
    <property type="match status" value="1"/>
</dbReference>
<dbReference type="Gene3D" id="3.40.50.300">
    <property type="entry name" value="P-loop containing nucleotide triphosphate hydrolases"/>
    <property type="match status" value="1"/>
</dbReference>
<dbReference type="HAMAP" id="MF_02040">
    <property type="entry name" value="Mrp_NBP35"/>
    <property type="match status" value="1"/>
</dbReference>
<dbReference type="HAMAP" id="MF_03039">
    <property type="entry name" value="NUBP2"/>
    <property type="match status" value="1"/>
</dbReference>
<dbReference type="InterPro" id="IPR000808">
    <property type="entry name" value="Mrp-like_CS"/>
</dbReference>
<dbReference type="InterPro" id="IPR019591">
    <property type="entry name" value="Mrp/NBP35_ATP-bd"/>
</dbReference>
<dbReference type="InterPro" id="IPR028600">
    <property type="entry name" value="NUBP2/Cfd1_eukaryotes"/>
</dbReference>
<dbReference type="InterPro" id="IPR027417">
    <property type="entry name" value="P-loop_NTPase"/>
</dbReference>
<dbReference type="InterPro" id="IPR033756">
    <property type="entry name" value="YlxH/NBP35"/>
</dbReference>
<dbReference type="PANTHER" id="PTHR23264:SF19">
    <property type="entry name" value="CYTOSOLIC FE-S CLUSTER ASSEMBLY FACTOR NUBP2"/>
    <property type="match status" value="1"/>
</dbReference>
<dbReference type="PANTHER" id="PTHR23264">
    <property type="entry name" value="NUCLEOTIDE-BINDING PROTEIN NBP35 YEAST -RELATED"/>
    <property type="match status" value="1"/>
</dbReference>
<dbReference type="Pfam" id="PF10609">
    <property type="entry name" value="ParA"/>
    <property type="match status" value="1"/>
</dbReference>
<dbReference type="SUPFAM" id="SSF52540">
    <property type="entry name" value="P-loop containing nucleoside triphosphate hydrolases"/>
    <property type="match status" value="1"/>
</dbReference>
<dbReference type="PROSITE" id="PS01215">
    <property type="entry name" value="MRP"/>
    <property type="match status" value="1"/>
</dbReference>
<comment type="function">
    <text evidence="2">Component of the cytosolic iron-sulfur (Fe/S) protein assembly (CIA) machinery. Required for maturation of extramitochondrial Fe-S proteins. The Nubp1-Nubp2 heterotetramer forms a Fe-S scaffold complex, mediating the de novo assembly of an Fe-S cluster and its transfer to target apoproteins.</text>
</comment>
<comment type="cofactor">
    <cofactor evidence="2">
        <name>[4Fe-4S] cluster</name>
        <dbReference type="ChEBI" id="CHEBI:49883"/>
    </cofactor>
    <text evidence="2">Binds 4 [4Fe-4S] clusters per heterotetramer. Contains two stable clusters in the N-termini of Nubp1 and two labile, bridging clusters between subunits of the Nubp1-Nubp2 heterotetramer.</text>
</comment>
<comment type="subunit">
    <text evidence="2">Heterotetramer of 2 Nubp1 and 2 Nubp2 chains.</text>
</comment>
<comment type="subcellular location">
    <subcellularLocation>
        <location evidence="2">Cytoplasm</location>
    </subcellularLocation>
</comment>
<comment type="similarity">
    <text evidence="2">Belongs to the Mrp/NBP35 ATP-binding proteins family. NUBP2/CFD1 subfamily.</text>
</comment>
<gene>
    <name evidence="1" type="primary">Nubp2</name>
    <name type="ORF">GK12055</name>
</gene>
<evidence type="ECO:0000250" key="1">
    <source>
        <dbReference type="UniProtKB" id="Q9VPD2"/>
    </source>
</evidence>
<evidence type="ECO:0000255" key="2">
    <source>
        <dbReference type="HAMAP-Rule" id="MF_03039"/>
    </source>
</evidence>
<protein>
    <recommendedName>
        <fullName evidence="2">Cytosolic Fe-S cluster assembly factor Nubp2 homolog</fullName>
    </recommendedName>
</protein>
<keyword id="KW-0004">4Fe-4S</keyword>
<keyword id="KW-0067">ATP-binding</keyword>
<keyword id="KW-0963">Cytoplasm</keyword>
<keyword id="KW-0408">Iron</keyword>
<keyword id="KW-0411">Iron-sulfur</keyword>
<keyword id="KW-0479">Metal-binding</keyword>
<keyword id="KW-0547">Nucleotide-binding</keyword>
<keyword id="KW-1185">Reference proteome</keyword>
<feature type="chain" id="PRO_0000382718" description="Cytosolic Fe-S cluster assembly factor Nubp2 homolog">
    <location>
        <begin position="1"/>
        <end position="261"/>
    </location>
</feature>
<feature type="binding site" evidence="2">
    <location>
        <begin position="14"/>
        <end position="21"/>
    </location>
    <ligand>
        <name>ATP</name>
        <dbReference type="ChEBI" id="CHEBI:30616"/>
    </ligand>
</feature>
<feature type="binding site" evidence="2">
    <location>
        <position position="188"/>
    </location>
    <ligand>
        <name>[4Fe-4S] cluster</name>
        <dbReference type="ChEBI" id="CHEBI:49883"/>
        <note>ligand shared between dimeric partners</note>
    </ligand>
</feature>
<feature type="binding site" evidence="2">
    <location>
        <position position="191"/>
    </location>
    <ligand>
        <name>[4Fe-4S] cluster</name>
        <dbReference type="ChEBI" id="CHEBI:49883"/>
        <note>ligand shared between dimeric partners</note>
    </ligand>
</feature>
<sequence length="261" mass="28055">MLDKVKNVIVVLSGKGGVGKSTVSTQLALALRHTGHKVGLLDIDLCGPSVPYLLGLEGSDIYQCDDGWVPIYTDESKTLAVMSIGFLLKSRTDPVIWRGPKKTMMIKQFLQDVKWDELDYLIIDTPPGTSDEHITVMECLREVPCNGAIIVTTPQGVALDDVRKEITFCKKTGIKLLGIVENMSGFVCPHCTTCTNIFSSNGGIELANLAQIPHLGTLPIDPRVGILAGTTASVLSELPESSTAEVLKGLVQHLDTLTAQG</sequence>
<reference key="1">
    <citation type="journal article" date="2007" name="Nature">
        <title>Evolution of genes and genomes on the Drosophila phylogeny.</title>
        <authorList>
            <consortium name="Drosophila 12 genomes consortium"/>
        </authorList>
    </citation>
    <scope>NUCLEOTIDE SEQUENCE [LARGE SCALE GENOMIC DNA]</scope>
    <source>
        <strain>Tucson 14030-0811.24</strain>
    </source>
</reference>
<organism>
    <name type="scientific">Drosophila willistoni</name>
    <name type="common">Fruit fly</name>
    <dbReference type="NCBI Taxonomy" id="7260"/>
    <lineage>
        <taxon>Eukaryota</taxon>
        <taxon>Metazoa</taxon>
        <taxon>Ecdysozoa</taxon>
        <taxon>Arthropoda</taxon>
        <taxon>Hexapoda</taxon>
        <taxon>Insecta</taxon>
        <taxon>Pterygota</taxon>
        <taxon>Neoptera</taxon>
        <taxon>Endopterygota</taxon>
        <taxon>Diptera</taxon>
        <taxon>Brachycera</taxon>
        <taxon>Muscomorpha</taxon>
        <taxon>Ephydroidea</taxon>
        <taxon>Drosophilidae</taxon>
        <taxon>Drosophila</taxon>
        <taxon>Sophophora</taxon>
    </lineage>
</organism>